<proteinExistence type="inferred from homology"/>
<organism>
    <name type="scientific">Hadronyche versuta</name>
    <name type="common">Blue mountains funnel-web spider</name>
    <name type="synonym">Atrax versutus</name>
    <dbReference type="NCBI Taxonomy" id="6904"/>
    <lineage>
        <taxon>Eukaryota</taxon>
        <taxon>Metazoa</taxon>
        <taxon>Ecdysozoa</taxon>
        <taxon>Arthropoda</taxon>
        <taxon>Chelicerata</taxon>
        <taxon>Arachnida</taxon>
        <taxon>Araneae</taxon>
        <taxon>Mygalomorphae</taxon>
        <taxon>Hexathelidae</taxon>
        <taxon>Hadronyche</taxon>
    </lineage>
</organism>
<keyword id="KW-1221">Calcium-activated potassium channel impairing toxin</keyword>
<keyword id="KW-0165">Cleavage on pair of basic residues</keyword>
<keyword id="KW-1015">Disulfide bond</keyword>
<keyword id="KW-0872">Ion channel impairing toxin</keyword>
<keyword id="KW-0960">Knottin</keyword>
<keyword id="KW-0528">Neurotoxin</keyword>
<keyword id="KW-0632">Potassium channel impairing toxin</keyword>
<keyword id="KW-0964">Secreted</keyword>
<keyword id="KW-0732">Signal</keyword>
<keyword id="KW-0800">Toxin</keyword>
<protein>
    <recommendedName>
        <fullName evidence="5">Lambda-hexatoxin-Hv1e</fullName>
        <shortName evidence="5">Lambda-HXTX-Hv1e</shortName>
    </recommendedName>
    <alternativeName>
        <fullName evidence="4">Kappa-hexatoxin-Hv1e</fullName>
    </alternativeName>
</protein>
<accession>S0F1M9</accession>
<dbReference type="EMBL" id="HG001310">
    <property type="protein sequence ID" value="CDF44171.1"/>
    <property type="molecule type" value="mRNA"/>
</dbReference>
<dbReference type="SMR" id="S0F1M9"/>
<dbReference type="GO" id="GO:0005576">
    <property type="term" value="C:extracellular region"/>
    <property type="evidence" value="ECO:0007669"/>
    <property type="project" value="UniProtKB-SubCell"/>
</dbReference>
<dbReference type="GO" id="GO:0015459">
    <property type="term" value="F:potassium channel regulator activity"/>
    <property type="evidence" value="ECO:0007669"/>
    <property type="project" value="UniProtKB-KW"/>
</dbReference>
<dbReference type="GO" id="GO:0090729">
    <property type="term" value="F:toxin activity"/>
    <property type="evidence" value="ECO:0007669"/>
    <property type="project" value="UniProtKB-KW"/>
</dbReference>
<dbReference type="InterPro" id="IPR012499">
    <property type="entry name" value="Toxin_16"/>
</dbReference>
<dbReference type="Pfam" id="PF07945">
    <property type="entry name" value="Toxin_16"/>
    <property type="match status" value="1"/>
</dbReference>
<dbReference type="SUPFAM" id="SSF57059">
    <property type="entry name" value="omega toxin-like"/>
    <property type="match status" value="1"/>
</dbReference>
<dbReference type="PROSITE" id="PS60020">
    <property type="entry name" value="J_ACTX"/>
    <property type="match status" value="1"/>
</dbReference>
<name>TK1E_HADVE</name>
<feature type="signal peptide" evidence="3">
    <location>
        <begin position="1"/>
        <end position="22"/>
    </location>
</feature>
<feature type="propeptide" id="PRO_0000430925" evidence="1">
    <location>
        <begin position="23"/>
        <end position="35"/>
    </location>
</feature>
<feature type="peptide" id="PRO_0000430926" description="Lambda-hexatoxin-Hv1e">
    <location>
        <begin position="38"/>
        <end position="74"/>
    </location>
</feature>
<feature type="site" description="Important for the neurotoxic activity" evidence="1">
    <location>
        <position position="39"/>
    </location>
</feature>
<feature type="site" description="Critical for the neurotoxic activity" evidence="1">
    <location>
        <position position="45"/>
    </location>
</feature>
<feature type="site" description="Critical for the neurotoxic activity" evidence="1">
    <location>
        <position position="46"/>
    </location>
</feature>
<feature type="site" description="Critical for the neurotoxic activity" evidence="1">
    <location>
        <position position="50"/>
    </location>
</feature>
<feature type="site" description="Critical for the neurotoxic activity" evidence="1">
    <location>
        <position position="51"/>
    </location>
</feature>
<feature type="site" description="Important for the neurotoxic activity" evidence="1">
    <location>
        <position position="66"/>
    </location>
</feature>
<feature type="site" description="Critical for the neurotoxic activity" evidence="1">
    <location>
        <position position="68"/>
    </location>
</feature>
<feature type="disulfide bond" evidence="1">
    <location>
        <begin position="40"/>
        <end position="54"/>
    </location>
</feature>
<feature type="disulfide bond" evidence="1">
    <location>
        <begin position="47"/>
        <end position="59"/>
    </location>
</feature>
<feature type="disulfide bond" evidence="1">
    <location>
        <begin position="50"/>
        <end position="51"/>
    </location>
</feature>
<feature type="disulfide bond" evidence="1">
    <location>
        <begin position="53"/>
        <end position="69"/>
    </location>
</feature>
<comment type="function">
    <text evidence="2">This excitatory toxin inhibits insect calcium-activated potassium (KCa) channels (Slo-type).</text>
</comment>
<comment type="subcellular location">
    <subcellularLocation>
        <location evidence="2">Secreted</location>
    </subcellularLocation>
</comment>
<comment type="tissue specificity">
    <text evidence="6">Expressed by the venom gland.</text>
</comment>
<comment type="domain">
    <text evidence="1">The presence of a 'disulfide through disulfide knot' structurally defines this protein as a knottin.</text>
</comment>
<comment type="similarity">
    <text evidence="4">Belongs to the neurotoxin 11 (kappa toxin) family.</text>
</comment>
<comment type="caution">
    <text evidence="5">This toxin has the prefix lambda in its name (instead of kappa), since lambda is the Greek letter attributed to calcium-activated potassium (KCa) channel impairing toxins (according to the nomenclature of King et al., 2008).</text>
</comment>
<evidence type="ECO:0000250" key="1"/>
<evidence type="ECO:0000250" key="2">
    <source>
        <dbReference type="UniProtKB" id="P82228"/>
    </source>
</evidence>
<evidence type="ECO:0000255" key="3"/>
<evidence type="ECO:0000303" key="4">
    <source>
    </source>
</evidence>
<evidence type="ECO:0000305" key="5"/>
<evidence type="ECO:0000305" key="6">
    <source>
    </source>
</evidence>
<reference key="1">
    <citation type="journal article" date="2014" name="BMC Genomics">
        <title>Diversification of a single ancestral gene into a successful toxin superfamily in highly venomous Australian funnel-web spiders.</title>
        <authorList>
            <person name="Pineda S.S."/>
            <person name="Sollod B.L."/>
            <person name="Wilson D."/>
            <person name="Darling A."/>
            <person name="Sunagar K."/>
            <person name="Undheim E.A."/>
            <person name="Kely L."/>
            <person name="Antunes A."/>
            <person name="Fry B.G."/>
            <person name="King G.F."/>
        </authorList>
    </citation>
    <scope>NUCLEOTIDE SEQUENCE [MRNA]</scope>
    <source>
        <tissue>Venom gland</tissue>
    </source>
</reference>
<sequence length="74" mass="7881">MNTATCFIVLLVVATVIGGIEAGEFDMRKDVMGLFRRAICPGADRPCAACCPCCPGTSCKAESNGVFYCRKDEP</sequence>